<sequence length="20" mass="2331">MKKCAFVSDFDGTISKQDFY</sequence>
<accession>P81949</accession>
<keyword id="KW-0963">Cytoplasm</keyword>
<keyword id="KW-0903">Direct protein sequencing</keyword>
<keyword id="KW-0378">Hydrolase</keyword>
<keyword id="KW-0460">Magnesium</keyword>
<keyword id="KW-0464">Manganese</keyword>
<keyword id="KW-0479">Metal-binding</keyword>
<feature type="chain" id="PRO_0000079882" description="D-alpha-glycerophosphatase">
    <location>
        <begin position="1"/>
        <end position="20" status="greater than"/>
    </location>
</feature>
<feature type="unsure residue" description="C or W">
    <location>
        <position position="4"/>
    </location>
</feature>
<feature type="non-terminal residue" evidence="2">
    <location>
        <position position="20"/>
    </location>
</feature>
<organism evidence="2">
    <name type="scientific">Bacillus licheniformis</name>
    <dbReference type="NCBI Taxonomy" id="1402"/>
    <lineage>
        <taxon>Bacteria</taxon>
        <taxon>Bacillati</taxon>
        <taxon>Bacillota</taxon>
        <taxon>Bacilli</taxon>
        <taxon>Bacillales</taxon>
        <taxon>Bacillaceae</taxon>
        <taxon>Bacillus</taxon>
    </lineage>
</organism>
<reference evidence="2" key="1">
    <citation type="journal article" date="1998" name="Arch. Biochem. Biophys.">
        <title>Purification and characterization of a Bacillus licheniformis phosphatase specific for D-alpha-glycerophosphate.</title>
        <authorList>
            <person name="Skraly F.A."/>
            <person name="Cameron D.C."/>
        </authorList>
    </citation>
    <scope>PROTEIN SEQUENCE</scope>
    <scope>COFACTOR</scope>
    <scope>PATHWAY</scope>
    <scope>SUBUNIT</scope>
    <scope>SUBCELLULAR LOCATION</scope>
    <source>
        <strain>ATCC 9789 / DSM 8785 / NBRC 12195 / NCIMB 6346 / NCTC 6346 / IMET 11025 / NRS 243</strain>
    </source>
</reference>
<comment type="cofactor">
    <cofactor evidence="1">
        <name>Mg(2+)</name>
        <dbReference type="ChEBI" id="CHEBI:18420"/>
    </cofactor>
    <cofactor evidence="1">
        <name>Mn(2+)</name>
        <dbReference type="ChEBI" id="CHEBI:29035"/>
    </cofactor>
    <text evidence="1">Manganese is efficient to a lesser extent.</text>
</comment>
<comment type="biophysicochemical properties">
    <phDependence>
        <text>Optimum pH is 7.1.</text>
    </phDependence>
</comment>
<comment type="pathway">
    <text evidence="1">Polyol metabolism; glycerol biosynthesis.</text>
</comment>
<comment type="subunit">
    <text evidence="1">Monomer.</text>
</comment>
<comment type="subcellular location">
    <subcellularLocation>
        <location evidence="1">Cytoplasm</location>
    </subcellularLocation>
</comment>
<proteinExistence type="evidence at protein level"/>
<dbReference type="EC" id="3.1.3.-"/>
<dbReference type="UniPathway" id="UPA00624"/>
<dbReference type="GO" id="GO:0005737">
    <property type="term" value="C:cytoplasm"/>
    <property type="evidence" value="ECO:0007669"/>
    <property type="project" value="UniProtKB-SubCell"/>
</dbReference>
<dbReference type="GO" id="GO:0016787">
    <property type="term" value="F:hydrolase activity"/>
    <property type="evidence" value="ECO:0007669"/>
    <property type="project" value="UniProtKB-KW"/>
</dbReference>
<dbReference type="GO" id="GO:0046872">
    <property type="term" value="F:metal ion binding"/>
    <property type="evidence" value="ECO:0007669"/>
    <property type="project" value="UniProtKB-KW"/>
</dbReference>
<dbReference type="GO" id="GO:0006114">
    <property type="term" value="P:glycerol biosynthetic process"/>
    <property type="evidence" value="ECO:0007669"/>
    <property type="project" value="UniProtKB-UniPathway"/>
</dbReference>
<name>DGPA_BACLI</name>
<protein>
    <recommendedName>
        <fullName>D-alpha-glycerophosphatase</fullName>
        <shortName>D-GPase</shortName>
        <ecNumber>3.1.3.-</ecNumber>
    </recommendedName>
</protein>
<evidence type="ECO:0000269" key="1">
    <source>
    </source>
</evidence>
<evidence type="ECO:0000305" key="2"/>